<reference key="1">
    <citation type="journal article" date="2004" name="Nature">
        <title>Genome sequence of Silicibacter pomeroyi reveals adaptations to the marine environment.</title>
        <authorList>
            <person name="Moran M.A."/>
            <person name="Buchan A."/>
            <person name="Gonzalez J.M."/>
            <person name="Heidelberg J.F."/>
            <person name="Whitman W.B."/>
            <person name="Kiene R.P."/>
            <person name="Henriksen J.R."/>
            <person name="King G.M."/>
            <person name="Belas R."/>
            <person name="Fuqua C."/>
            <person name="Brinkac L.M."/>
            <person name="Lewis M."/>
            <person name="Johri S."/>
            <person name="Weaver B."/>
            <person name="Pai G."/>
            <person name="Eisen J.A."/>
            <person name="Rahe E."/>
            <person name="Sheldon W.M."/>
            <person name="Ye W."/>
            <person name="Miller T.R."/>
            <person name="Carlton J."/>
            <person name="Rasko D.A."/>
            <person name="Paulsen I.T."/>
            <person name="Ren Q."/>
            <person name="Daugherty S.C."/>
            <person name="DeBoy R.T."/>
            <person name="Dodson R.J."/>
            <person name="Durkin A.S."/>
            <person name="Madupu R."/>
            <person name="Nelson W.C."/>
            <person name="Sullivan S.A."/>
            <person name="Rosovitz M.J."/>
            <person name="Haft D.H."/>
            <person name="Selengut J."/>
            <person name="Ward N."/>
        </authorList>
    </citation>
    <scope>NUCLEOTIDE SEQUENCE [LARGE SCALE GENOMIC DNA]</scope>
    <source>
        <strain>ATCC 700808 / DSM 15171 / DSS-3</strain>
    </source>
</reference>
<reference key="2">
    <citation type="journal article" date="2014" name="Stand. Genomic Sci.">
        <title>An updated genome annotation for the model marine bacterium Ruegeria pomeroyi DSS-3.</title>
        <authorList>
            <person name="Rivers A.R."/>
            <person name="Smith C.B."/>
            <person name="Moran M.A."/>
        </authorList>
    </citation>
    <scope>GENOME REANNOTATION</scope>
    <source>
        <strain>ATCC 700808 / DSM 15171 / DSS-3</strain>
    </source>
</reference>
<name>MDH_RUEPO</name>
<organism>
    <name type="scientific">Ruegeria pomeroyi (strain ATCC 700808 / DSM 15171 / DSS-3)</name>
    <name type="common">Silicibacter pomeroyi</name>
    <dbReference type="NCBI Taxonomy" id="246200"/>
    <lineage>
        <taxon>Bacteria</taxon>
        <taxon>Pseudomonadati</taxon>
        <taxon>Pseudomonadota</taxon>
        <taxon>Alphaproteobacteria</taxon>
        <taxon>Rhodobacterales</taxon>
        <taxon>Roseobacteraceae</taxon>
        <taxon>Ruegeria</taxon>
    </lineage>
</organism>
<accession>Q5LXE1</accession>
<protein>
    <recommendedName>
        <fullName evidence="1">Malate dehydrogenase</fullName>
        <ecNumber evidence="1">1.1.1.37</ecNumber>
    </recommendedName>
</protein>
<comment type="function">
    <text evidence="1">Catalyzes the reversible oxidation of malate to oxaloacetate.</text>
</comment>
<comment type="catalytic activity">
    <reaction evidence="1">
        <text>(S)-malate + NAD(+) = oxaloacetate + NADH + H(+)</text>
        <dbReference type="Rhea" id="RHEA:21432"/>
        <dbReference type="ChEBI" id="CHEBI:15378"/>
        <dbReference type="ChEBI" id="CHEBI:15589"/>
        <dbReference type="ChEBI" id="CHEBI:16452"/>
        <dbReference type="ChEBI" id="CHEBI:57540"/>
        <dbReference type="ChEBI" id="CHEBI:57945"/>
        <dbReference type="EC" id="1.1.1.37"/>
    </reaction>
</comment>
<comment type="similarity">
    <text evidence="1">Belongs to the LDH/MDH superfamily. MDH type 3 family.</text>
</comment>
<feature type="chain" id="PRO_0000113471" description="Malate dehydrogenase">
    <location>
        <begin position="1"/>
        <end position="320"/>
    </location>
</feature>
<feature type="active site" description="Proton acceptor" evidence="1">
    <location>
        <position position="176"/>
    </location>
</feature>
<feature type="binding site" evidence="1">
    <location>
        <begin position="10"/>
        <end position="15"/>
    </location>
    <ligand>
        <name>NAD(+)</name>
        <dbReference type="ChEBI" id="CHEBI:57540"/>
    </ligand>
</feature>
<feature type="binding site" evidence="1">
    <location>
        <position position="34"/>
    </location>
    <ligand>
        <name>NAD(+)</name>
        <dbReference type="ChEBI" id="CHEBI:57540"/>
    </ligand>
</feature>
<feature type="binding site" evidence="1">
    <location>
        <position position="83"/>
    </location>
    <ligand>
        <name>substrate</name>
    </ligand>
</feature>
<feature type="binding site" evidence="1">
    <location>
        <position position="89"/>
    </location>
    <ligand>
        <name>substrate</name>
    </ligand>
</feature>
<feature type="binding site" evidence="1">
    <location>
        <position position="96"/>
    </location>
    <ligand>
        <name>NAD(+)</name>
        <dbReference type="ChEBI" id="CHEBI:57540"/>
    </ligand>
</feature>
<feature type="binding site" evidence="1">
    <location>
        <begin position="119"/>
        <end position="121"/>
    </location>
    <ligand>
        <name>NAD(+)</name>
        <dbReference type="ChEBI" id="CHEBI:57540"/>
    </ligand>
</feature>
<feature type="binding site" evidence="1">
    <location>
        <position position="121"/>
    </location>
    <ligand>
        <name>substrate</name>
    </ligand>
</feature>
<feature type="binding site" evidence="1">
    <location>
        <position position="152"/>
    </location>
    <ligand>
        <name>substrate</name>
    </ligand>
</feature>
<evidence type="ECO:0000255" key="1">
    <source>
        <dbReference type="HAMAP-Rule" id="MF_00487"/>
    </source>
</evidence>
<keyword id="KW-0520">NAD</keyword>
<keyword id="KW-0560">Oxidoreductase</keyword>
<keyword id="KW-1185">Reference proteome</keyword>
<keyword id="KW-0816">Tricarboxylic acid cycle</keyword>
<dbReference type="EC" id="1.1.1.37" evidence="1"/>
<dbReference type="EMBL" id="CP000031">
    <property type="protein sequence ID" value="AAV93667.1"/>
    <property type="molecule type" value="Genomic_DNA"/>
</dbReference>
<dbReference type="RefSeq" id="WP_011046110.1">
    <property type="nucleotide sequence ID" value="NC_003911.12"/>
</dbReference>
<dbReference type="SMR" id="Q5LXE1"/>
<dbReference type="STRING" id="246200.SPO0349"/>
<dbReference type="PaxDb" id="246200-SPO0349"/>
<dbReference type="KEGG" id="sil:SPO0349"/>
<dbReference type="eggNOG" id="COG0039">
    <property type="taxonomic scope" value="Bacteria"/>
</dbReference>
<dbReference type="HOGENOM" id="CLU_045401_2_1_5"/>
<dbReference type="OrthoDB" id="9802969at2"/>
<dbReference type="Proteomes" id="UP000001023">
    <property type="component" value="Chromosome"/>
</dbReference>
<dbReference type="GO" id="GO:0004459">
    <property type="term" value="F:L-lactate dehydrogenase activity"/>
    <property type="evidence" value="ECO:0007669"/>
    <property type="project" value="TreeGrafter"/>
</dbReference>
<dbReference type="GO" id="GO:0030060">
    <property type="term" value="F:L-malate dehydrogenase (NAD+) activity"/>
    <property type="evidence" value="ECO:0007669"/>
    <property type="project" value="UniProtKB-UniRule"/>
</dbReference>
<dbReference type="GO" id="GO:0006089">
    <property type="term" value="P:lactate metabolic process"/>
    <property type="evidence" value="ECO:0007669"/>
    <property type="project" value="TreeGrafter"/>
</dbReference>
<dbReference type="GO" id="GO:0006099">
    <property type="term" value="P:tricarboxylic acid cycle"/>
    <property type="evidence" value="ECO:0007669"/>
    <property type="project" value="UniProtKB-UniRule"/>
</dbReference>
<dbReference type="CDD" id="cd01339">
    <property type="entry name" value="LDH-like_MDH"/>
    <property type="match status" value="1"/>
</dbReference>
<dbReference type="FunFam" id="3.40.50.720:FF:000018">
    <property type="entry name" value="Malate dehydrogenase"/>
    <property type="match status" value="1"/>
</dbReference>
<dbReference type="FunFam" id="3.90.110.10:FF:000004">
    <property type="entry name" value="Malate dehydrogenase"/>
    <property type="match status" value="1"/>
</dbReference>
<dbReference type="Gene3D" id="3.90.110.10">
    <property type="entry name" value="Lactate dehydrogenase/glycoside hydrolase, family 4, C-terminal"/>
    <property type="match status" value="1"/>
</dbReference>
<dbReference type="Gene3D" id="3.40.50.720">
    <property type="entry name" value="NAD(P)-binding Rossmann-like Domain"/>
    <property type="match status" value="1"/>
</dbReference>
<dbReference type="HAMAP" id="MF_00487">
    <property type="entry name" value="Malate_dehydrog_3"/>
    <property type="match status" value="1"/>
</dbReference>
<dbReference type="InterPro" id="IPR001557">
    <property type="entry name" value="L-lactate/malate_DH"/>
</dbReference>
<dbReference type="InterPro" id="IPR022383">
    <property type="entry name" value="Lactate/malate_DH_C"/>
</dbReference>
<dbReference type="InterPro" id="IPR001236">
    <property type="entry name" value="Lactate/malate_DH_N"/>
</dbReference>
<dbReference type="InterPro" id="IPR015955">
    <property type="entry name" value="Lactate_DH/Glyco_Ohase_4_C"/>
</dbReference>
<dbReference type="InterPro" id="IPR011275">
    <property type="entry name" value="Malate_DH_type3"/>
</dbReference>
<dbReference type="InterPro" id="IPR036291">
    <property type="entry name" value="NAD(P)-bd_dom_sf"/>
</dbReference>
<dbReference type="NCBIfam" id="TIGR01763">
    <property type="entry name" value="MalateDH_bact"/>
    <property type="match status" value="1"/>
</dbReference>
<dbReference type="NCBIfam" id="NF004863">
    <property type="entry name" value="PRK06223.1"/>
    <property type="match status" value="1"/>
</dbReference>
<dbReference type="PANTHER" id="PTHR43128">
    <property type="entry name" value="L-2-HYDROXYCARBOXYLATE DEHYDROGENASE (NAD(P)(+))"/>
    <property type="match status" value="1"/>
</dbReference>
<dbReference type="PANTHER" id="PTHR43128:SF16">
    <property type="entry name" value="L-LACTATE DEHYDROGENASE"/>
    <property type="match status" value="1"/>
</dbReference>
<dbReference type="Pfam" id="PF02866">
    <property type="entry name" value="Ldh_1_C"/>
    <property type="match status" value="1"/>
</dbReference>
<dbReference type="Pfam" id="PF00056">
    <property type="entry name" value="Ldh_1_N"/>
    <property type="match status" value="1"/>
</dbReference>
<dbReference type="PIRSF" id="PIRSF000102">
    <property type="entry name" value="Lac_mal_DH"/>
    <property type="match status" value="1"/>
</dbReference>
<dbReference type="PRINTS" id="PR00086">
    <property type="entry name" value="LLDHDRGNASE"/>
</dbReference>
<dbReference type="SUPFAM" id="SSF56327">
    <property type="entry name" value="LDH C-terminal domain-like"/>
    <property type="match status" value="1"/>
</dbReference>
<dbReference type="SUPFAM" id="SSF51735">
    <property type="entry name" value="NAD(P)-binding Rossmann-fold domains"/>
    <property type="match status" value="1"/>
</dbReference>
<proteinExistence type="inferred from homology"/>
<sequence length="320" mass="33535">MARPKIALIGAGQIGGTLAHLVALKELGDVVLFDIAEGTPEGKALDIAESGPSEGFDAKLKGTQSYADIAGADVCIVTAGVPRKPGMSRDDLLGINLKVMKSVGEGIRDNAPDAFVICITNPLDAMVWALQQFSGLPANKVCGMAGVLDSARFRHFLAEEFNVSMKDVTAFVLGGHGDTMVPSVRYSTVAGIPLPDLIKMGWTSQEKLDAIVQRTRDGGAEIVGLLKTGSAYYAPATSAIEMAEAYLKDQKRVLPCAAYCNGELGVKGMYVGVPTVIGAGGIERIIDVSLTKEEQDMFDNSVNAVKGLVEACKGIDGSLA</sequence>
<gene>
    <name evidence="1" type="primary">mdh</name>
    <name type="ordered locus">SPO0349</name>
</gene>